<feature type="propeptide" id="PRO_0000028313" description="Activation peptide">
    <location>
        <begin position="1"/>
        <end position="7"/>
    </location>
</feature>
<feature type="chain" id="PRO_0000028314" description="Trypsin">
    <location>
        <begin position="8"/>
        <end position="21" status="greater than"/>
    </location>
</feature>
<feature type="domain" description="Peptidase S1" evidence="1">
    <location>
        <begin position="8"/>
        <end position="21" status="greater than"/>
    </location>
</feature>
<feature type="non-terminal residue">
    <location>
        <position position="21"/>
    </location>
</feature>
<evidence type="ECO:0000255" key="1">
    <source>
        <dbReference type="PROSITE-ProRule" id="PRU00274"/>
    </source>
</evidence>
<dbReference type="EC" id="3.4.21.4"/>
<dbReference type="PIR" id="A27719">
    <property type="entry name" value="A27719"/>
</dbReference>
<dbReference type="MEROPS" id="S01.125"/>
<dbReference type="GO" id="GO:0005576">
    <property type="term" value="C:extracellular region"/>
    <property type="evidence" value="ECO:0007669"/>
    <property type="project" value="UniProtKB-SubCell"/>
</dbReference>
<dbReference type="GO" id="GO:0004252">
    <property type="term" value="F:serine-type endopeptidase activity"/>
    <property type="evidence" value="ECO:0007669"/>
    <property type="project" value="UniProtKB-EC"/>
</dbReference>
<dbReference type="GO" id="GO:0006508">
    <property type="term" value="P:proteolysis"/>
    <property type="evidence" value="ECO:0007669"/>
    <property type="project" value="UniProtKB-KW"/>
</dbReference>
<accession>P35051</accession>
<sequence>FPIEEDKIVGGYECPKHXVPW</sequence>
<comment type="catalytic activity">
    <reaction>
        <text>Preferential cleavage: Arg-|-Xaa, Lys-|-Xaa.</text>
        <dbReference type="EC" id="3.4.21.4"/>
    </reaction>
</comment>
<comment type="subcellular location">
    <subcellularLocation>
        <location>Secreted</location>
        <location>Extracellular space</location>
    </subcellularLocation>
</comment>
<comment type="similarity">
    <text evidence="1">Belongs to the peptidase S1 family.</text>
</comment>
<reference key="1">
    <citation type="journal article" date="1971" name="FEBS Lett.">
        <title>Comparison of the amino terminal sequences of bovine, dogfish, and lungfish trypsinogens.</title>
        <authorList>
            <person name="Hermodson M.A."/>
            <person name="Tye R.W."/>
            <person name="Reeck G.R."/>
            <person name="Neurath H."/>
            <person name="Walsh K.A."/>
        </authorList>
    </citation>
    <scope>PROTEIN SEQUENCE</scope>
    <source>
        <tissue>Pancreas</tissue>
    </source>
</reference>
<name>TRYP_PROAT</name>
<protein>
    <recommendedName>
        <fullName>Trypsin</fullName>
        <ecNumber>3.4.21.4</ecNumber>
    </recommendedName>
</protein>
<proteinExistence type="evidence at protein level"/>
<organism>
    <name type="scientific">Protopterus aethiopicus</name>
    <name type="common">Marbled lungfish</name>
    <dbReference type="NCBI Taxonomy" id="7886"/>
    <lineage>
        <taxon>Eukaryota</taxon>
        <taxon>Metazoa</taxon>
        <taxon>Chordata</taxon>
        <taxon>Craniata</taxon>
        <taxon>Vertebrata</taxon>
        <taxon>Euteleostomi</taxon>
        <taxon>Dipnomorpha</taxon>
        <taxon>Ceratodontiformes</taxon>
        <taxon>Lepidosirenoidei</taxon>
        <taxon>Protopteridae</taxon>
        <taxon>Protopterus</taxon>
    </lineage>
</organism>
<keyword id="KW-0903">Direct protein sequencing</keyword>
<keyword id="KW-0378">Hydrolase</keyword>
<keyword id="KW-0645">Protease</keyword>
<keyword id="KW-0964">Secreted</keyword>
<keyword id="KW-0720">Serine protease</keyword>
<keyword id="KW-0865">Zymogen</keyword>